<comment type="function">
    <text evidence="1">Catalyzes the reversible interconversion of serine and glycine with tetrahydrofolate (THF) serving as the one-carbon carrier. This reaction serves as the major source of one-carbon groups required for the biosynthesis of purines, thymidylate, methionine, and other important biomolecules. Also exhibits THF-independent aldolase activity toward beta-hydroxyamino acids, producing glycine and aldehydes, via a retro-aldol mechanism.</text>
</comment>
<comment type="catalytic activity">
    <reaction evidence="1">
        <text>(6R)-5,10-methylene-5,6,7,8-tetrahydrofolate + glycine + H2O = (6S)-5,6,7,8-tetrahydrofolate + L-serine</text>
        <dbReference type="Rhea" id="RHEA:15481"/>
        <dbReference type="ChEBI" id="CHEBI:15377"/>
        <dbReference type="ChEBI" id="CHEBI:15636"/>
        <dbReference type="ChEBI" id="CHEBI:33384"/>
        <dbReference type="ChEBI" id="CHEBI:57305"/>
        <dbReference type="ChEBI" id="CHEBI:57453"/>
        <dbReference type="EC" id="2.1.2.1"/>
    </reaction>
</comment>
<comment type="cofactor">
    <cofactor evidence="1">
        <name>pyridoxal 5'-phosphate</name>
        <dbReference type="ChEBI" id="CHEBI:597326"/>
    </cofactor>
</comment>
<comment type="pathway">
    <text evidence="1">One-carbon metabolism; tetrahydrofolate interconversion.</text>
</comment>
<comment type="pathway">
    <text evidence="1">Amino-acid biosynthesis; glycine biosynthesis; glycine from L-serine: step 1/1.</text>
</comment>
<comment type="subunit">
    <text evidence="1">Homodimer.</text>
</comment>
<comment type="subcellular location">
    <subcellularLocation>
        <location evidence="1">Cytoplasm</location>
    </subcellularLocation>
</comment>
<comment type="similarity">
    <text evidence="1">Belongs to the SHMT family.</text>
</comment>
<organism>
    <name type="scientific">Photobacterium profundum (strain SS9)</name>
    <dbReference type="NCBI Taxonomy" id="298386"/>
    <lineage>
        <taxon>Bacteria</taxon>
        <taxon>Pseudomonadati</taxon>
        <taxon>Pseudomonadota</taxon>
        <taxon>Gammaproteobacteria</taxon>
        <taxon>Vibrionales</taxon>
        <taxon>Vibrionaceae</taxon>
        <taxon>Photobacterium</taxon>
    </lineage>
</organism>
<keyword id="KW-0028">Amino-acid biosynthesis</keyword>
<keyword id="KW-0963">Cytoplasm</keyword>
<keyword id="KW-0554">One-carbon metabolism</keyword>
<keyword id="KW-0663">Pyridoxal phosphate</keyword>
<keyword id="KW-1185">Reference proteome</keyword>
<keyword id="KW-0808">Transferase</keyword>
<reference key="1">
    <citation type="journal article" date="2005" name="Science">
        <title>Life at depth: Photobacterium profundum genome sequence and expression analysis.</title>
        <authorList>
            <person name="Vezzi A."/>
            <person name="Campanaro S."/>
            <person name="D'Angelo M."/>
            <person name="Simonato F."/>
            <person name="Vitulo N."/>
            <person name="Lauro F.M."/>
            <person name="Cestaro A."/>
            <person name="Malacrida G."/>
            <person name="Simionati B."/>
            <person name="Cannata N."/>
            <person name="Romualdi C."/>
            <person name="Bartlett D.H."/>
            <person name="Valle G."/>
        </authorList>
    </citation>
    <scope>NUCLEOTIDE SEQUENCE [LARGE SCALE GENOMIC DNA]</scope>
    <source>
        <strain>ATCC BAA-1253 / SS9</strain>
    </source>
</reference>
<dbReference type="EC" id="2.1.2.1" evidence="1"/>
<dbReference type="EMBL" id="CR378665">
    <property type="protein sequence ID" value="CAG19208.1"/>
    <property type="molecule type" value="Genomic_DNA"/>
</dbReference>
<dbReference type="SMR" id="Q6LU17"/>
<dbReference type="STRING" id="298386.PBPRA0795"/>
<dbReference type="KEGG" id="ppr:PBPRA0795"/>
<dbReference type="eggNOG" id="COG0112">
    <property type="taxonomic scope" value="Bacteria"/>
</dbReference>
<dbReference type="HOGENOM" id="CLU_022477_2_1_6"/>
<dbReference type="UniPathway" id="UPA00193"/>
<dbReference type="UniPathway" id="UPA00288">
    <property type="reaction ID" value="UER01023"/>
</dbReference>
<dbReference type="Proteomes" id="UP000000593">
    <property type="component" value="Chromosome 1"/>
</dbReference>
<dbReference type="GO" id="GO:0005829">
    <property type="term" value="C:cytosol"/>
    <property type="evidence" value="ECO:0007669"/>
    <property type="project" value="TreeGrafter"/>
</dbReference>
<dbReference type="GO" id="GO:0004372">
    <property type="term" value="F:glycine hydroxymethyltransferase activity"/>
    <property type="evidence" value="ECO:0007669"/>
    <property type="project" value="UniProtKB-UniRule"/>
</dbReference>
<dbReference type="GO" id="GO:0030170">
    <property type="term" value="F:pyridoxal phosphate binding"/>
    <property type="evidence" value="ECO:0007669"/>
    <property type="project" value="UniProtKB-UniRule"/>
</dbReference>
<dbReference type="GO" id="GO:0019264">
    <property type="term" value="P:glycine biosynthetic process from serine"/>
    <property type="evidence" value="ECO:0007669"/>
    <property type="project" value="UniProtKB-UniRule"/>
</dbReference>
<dbReference type="GO" id="GO:0035999">
    <property type="term" value="P:tetrahydrofolate interconversion"/>
    <property type="evidence" value="ECO:0007669"/>
    <property type="project" value="UniProtKB-UniRule"/>
</dbReference>
<dbReference type="CDD" id="cd00378">
    <property type="entry name" value="SHMT"/>
    <property type="match status" value="1"/>
</dbReference>
<dbReference type="FunFam" id="3.40.640.10:FF:000001">
    <property type="entry name" value="Serine hydroxymethyltransferase"/>
    <property type="match status" value="1"/>
</dbReference>
<dbReference type="FunFam" id="3.90.1150.10:FF:000003">
    <property type="entry name" value="Serine hydroxymethyltransferase"/>
    <property type="match status" value="1"/>
</dbReference>
<dbReference type="Gene3D" id="3.90.1150.10">
    <property type="entry name" value="Aspartate Aminotransferase, domain 1"/>
    <property type="match status" value="1"/>
</dbReference>
<dbReference type="Gene3D" id="3.40.640.10">
    <property type="entry name" value="Type I PLP-dependent aspartate aminotransferase-like (Major domain)"/>
    <property type="match status" value="1"/>
</dbReference>
<dbReference type="HAMAP" id="MF_00051">
    <property type="entry name" value="SHMT"/>
    <property type="match status" value="1"/>
</dbReference>
<dbReference type="InterPro" id="IPR015424">
    <property type="entry name" value="PyrdxlP-dep_Trfase"/>
</dbReference>
<dbReference type="InterPro" id="IPR015421">
    <property type="entry name" value="PyrdxlP-dep_Trfase_major"/>
</dbReference>
<dbReference type="InterPro" id="IPR015422">
    <property type="entry name" value="PyrdxlP-dep_Trfase_small"/>
</dbReference>
<dbReference type="InterPro" id="IPR001085">
    <property type="entry name" value="Ser_HO-MeTrfase"/>
</dbReference>
<dbReference type="InterPro" id="IPR049943">
    <property type="entry name" value="Ser_HO-MeTrfase-like"/>
</dbReference>
<dbReference type="InterPro" id="IPR019798">
    <property type="entry name" value="Ser_HO-MeTrfase_PLP_BS"/>
</dbReference>
<dbReference type="InterPro" id="IPR039429">
    <property type="entry name" value="SHMT-like_dom"/>
</dbReference>
<dbReference type="NCBIfam" id="NF000586">
    <property type="entry name" value="PRK00011.1"/>
    <property type="match status" value="1"/>
</dbReference>
<dbReference type="PANTHER" id="PTHR11680">
    <property type="entry name" value="SERINE HYDROXYMETHYLTRANSFERASE"/>
    <property type="match status" value="1"/>
</dbReference>
<dbReference type="PANTHER" id="PTHR11680:SF50">
    <property type="entry name" value="SERINE HYDROXYMETHYLTRANSFERASE"/>
    <property type="match status" value="1"/>
</dbReference>
<dbReference type="Pfam" id="PF00464">
    <property type="entry name" value="SHMT"/>
    <property type="match status" value="1"/>
</dbReference>
<dbReference type="PIRSF" id="PIRSF000412">
    <property type="entry name" value="SHMT"/>
    <property type="match status" value="1"/>
</dbReference>
<dbReference type="SUPFAM" id="SSF53383">
    <property type="entry name" value="PLP-dependent transferases"/>
    <property type="match status" value="1"/>
</dbReference>
<dbReference type="PROSITE" id="PS00096">
    <property type="entry name" value="SHMT"/>
    <property type="match status" value="1"/>
</dbReference>
<protein>
    <recommendedName>
        <fullName evidence="1">Serine hydroxymethyltransferase 1</fullName>
        <shortName evidence="1">SHMT 1</shortName>
        <shortName evidence="1">Serine methylase 1</shortName>
        <ecNumber evidence="1">2.1.2.1</ecNumber>
    </recommendedName>
</protein>
<name>GLYA1_PHOPR</name>
<proteinExistence type="inferred from homology"/>
<evidence type="ECO:0000255" key="1">
    <source>
        <dbReference type="HAMAP-Rule" id="MF_00051"/>
    </source>
</evidence>
<accession>Q6LU17</accession>
<feature type="chain" id="PRO_0000113631" description="Serine hydroxymethyltransferase 1">
    <location>
        <begin position="1"/>
        <end position="416"/>
    </location>
</feature>
<feature type="binding site" evidence="1">
    <location>
        <position position="121"/>
    </location>
    <ligand>
        <name>(6S)-5,6,7,8-tetrahydrofolate</name>
        <dbReference type="ChEBI" id="CHEBI:57453"/>
    </ligand>
</feature>
<feature type="binding site" evidence="1">
    <location>
        <begin position="125"/>
        <end position="127"/>
    </location>
    <ligand>
        <name>(6S)-5,6,7,8-tetrahydrofolate</name>
        <dbReference type="ChEBI" id="CHEBI:57453"/>
    </ligand>
</feature>
<feature type="binding site" evidence="1">
    <location>
        <position position="245"/>
    </location>
    <ligand>
        <name>(6S)-5,6,7,8-tetrahydrofolate</name>
        <dbReference type="ChEBI" id="CHEBI:57453"/>
    </ligand>
</feature>
<feature type="binding site" evidence="1">
    <location>
        <begin position="354"/>
        <end position="356"/>
    </location>
    <ligand>
        <name>(6S)-5,6,7,8-tetrahydrofolate</name>
        <dbReference type="ChEBI" id="CHEBI:57453"/>
    </ligand>
</feature>
<feature type="site" description="Plays an important role in substrate specificity" evidence="1">
    <location>
        <position position="228"/>
    </location>
</feature>
<feature type="modified residue" description="N6-(pyridoxal phosphate)lysine" evidence="1">
    <location>
        <position position="229"/>
    </location>
</feature>
<sequence>MLKRDMNIADYDAELFAAIQEETARQEEHIELIASENYTSPRVMEAQGSQLTNKYAEGYPGKRYYGGCEFVDKAEQLAIDRACQLFGAEYANVQPHSGSQANNAVYMALLNPGDTVLGMSLAHGGHLTHGSPVNFSGKLYNIIPYGIDETGQIDYEEMEALALEHKPKMIIGGFSAYSQVVDWKRMREIADKVGAYFFVDMAHVAGLIAAGVYPNPVPHAHVVTTTTHKTLAGPRGGLILSNDGEALYKKLNSAVFPGGQGGPLMHVIAAKAVAFKEAMEPEFKVYQACVVENAKAMVGEFLERGYKIVSGSTENHLFLVDLIDKGITGKEADAALGAANITVNKNSVPNDPRSPFVTSGIRIGTPSITRRGFTVEDTKQLAGWICDVLDNTDKPEVIEATKAKVLEICKRLPVYA</sequence>
<gene>
    <name evidence="1" type="primary">glyA1</name>
    <name type="ordered locus">PBPRA0795</name>
</gene>